<proteinExistence type="inferred from homology"/>
<feature type="chain" id="PRO_0000133047" description="Uncharacterized 8.2 kDa protein in HE65-PK2 intergenic region">
    <location>
        <begin position="1"/>
        <end position="67"/>
    </location>
</feature>
<reference key="1">
    <citation type="journal article" date="1994" name="Virology">
        <title>The complete DNA sequence of Autographa californica nuclear polyhedrosis virus.</title>
        <authorList>
            <person name="Ayres M.D."/>
            <person name="Howard S.C."/>
            <person name="Kuzio J."/>
            <person name="Lopez-Ferber M."/>
            <person name="Possee R.D."/>
        </authorList>
    </citation>
    <scope>NUCLEOTIDE SEQUENCE [LARGE SCALE GENOMIC DNA]</scope>
    <source>
        <strain>C6</strain>
    </source>
</reference>
<protein>
    <recommendedName>
        <fullName>Uncharacterized 8.2 kDa protein in HE65-PK2 intergenic region</fullName>
    </recommendedName>
</protein>
<accession>P41664</accession>
<sequence length="67" mass="8169">MDNYSVQNFYNNDRKPLKPTTLHDGNIKKSVYEDVTYIRKLMCKEIMPGEHDHKFYNYGYNKENKYK</sequence>
<dbReference type="EMBL" id="L22858">
    <property type="protein sequence ID" value="AAA66741.1"/>
    <property type="molecule type" value="Genomic_DNA"/>
</dbReference>
<dbReference type="PIR" id="H72863">
    <property type="entry name" value="H72863"/>
</dbReference>
<dbReference type="RefSeq" id="NP_054141.1">
    <property type="nucleotide sequence ID" value="NC_001623.1"/>
</dbReference>
<dbReference type="GeneID" id="1403944"/>
<dbReference type="KEGG" id="vg:1403944"/>
<dbReference type="OrthoDB" id="24249at10239"/>
<dbReference type="Proteomes" id="UP000008292">
    <property type="component" value="Segment"/>
</dbReference>
<dbReference type="InterPro" id="IPR009289">
    <property type="entry name" value="Baculo_8kDa"/>
</dbReference>
<dbReference type="Pfam" id="PF06096">
    <property type="entry name" value="Baculo_8kDa"/>
    <property type="match status" value="1"/>
</dbReference>
<evidence type="ECO:0000305" key="1"/>
<organism>
    <name type="scientific">Autographa californica nuclear polyhedrosis virus</name>
    <name type="common">AcMNPV</name>
    <dbReference type="NCBI Taxonomy" id="46015"/>
    <lineage>
        <taxon>Viruses</taxon>
        <taxon>Viruses incertae sedis</taxon>
        <taxon>Naldaviricetes</taxon>
        <taxon>Lefavirales</taxon>
        <taxon>Baculoviridae</taxon>
        <taxon>Alphabaculovirus</taxon>
        <taxon>Alphabaculovirus aucalifornicae</taxon>
    </lineage>
</organism>
<name>Y111_NPVAC</name>
<comment type="similarity">
    <text evidence="1">Belongs to the baculoviridae 8 kDa protein family.</text>
</comment>
<keyword id="KW-1185">Reference proteome</keyword>
<organismHost>
    <name type="scientific">Lepidoptera</name>
    <name type="common">butterflies and moths</name>
    <dbReference type="NCBI Taxonomy" id="7088"/>
</organismHost>